<accession>Q8L7N0</accession>
<accession>Q9LFR8</accession>
<protein>
    <recommendedName>
        <fullName evidence="2">T-complex protein 1 subunit zeta 2</fullName>
        <shortName evidence="2">TCP-1-zeta 2</shortName>
    </recommendedName>
    <alternativeName>
        <fullName evidence="2">CCT-zeta 2</fullName>
    </alternativeName>
    <alternativeName>
        <fullName evidence="3">Chaperonin CCT6B</fullName>
    </alternativeName>
</protein>
<comment type="function">
    <text evidence="3">Molecular chaperone; assists the folding of proteins upon ATP hydrolysis. Known to play a role, in vitro, in the folding of actin and tubulin.</text>
</comment>
<comment type="subunit">
    <text evidence="4">Heterooligomeric complex of about 850 to 900 kDa that forms two stacked rings, 12 to 16 nm in diameter.</text>
</comment>
<comment type="subcellular location">
    <subcellularLocation>
        <location evidence="3">Cytoplasm</location>
    </subcellularLocation>
</comment>
<comment type="similarity">
    <text evidence="1">Belongs to the TCP-1 chaperonin family.</text>
</comment>
<comment type="sequence caution" evidence="3">
    <conflict type="erroneous gene model prediction">
        <sequence resource="EMBL-CDS" id="CAC01806"/>
    </conflict>
</comment>
<proteinExistence type="evidence at protein level"/>
<name>TCPZB_ARATH</name>
<evidence type="ECO:0000255" key="1">
    <source>
        <dbReference type="RuleBase" id="RU004187"/>
    </source>
</evidence>
<evidence type="ECO:0000303" key="2">
    <source>
    </source>
</evidence>
<evidence type="ECO:0000305" key="3"/>
<evidence type="ECO:0000305" key="4">
    <source>
    </source>
</evidence>
<evidence type="ECO:0000312" key="5">
    <source>
        <dbReference type="Araport" id="AT5G16070"/>
    </source>
</evidence>
<evidence type="ECO:0000312" key="6">
    <source>
        <dbReference type="EMBL" id="AAM91565.1"/>
    </source>
</evidence>
<evidence type="ECO:0000312" key="7">
    <source>
        <dbReference type="EMBL" id="CAC01806.1"/>
    </source>
</evidence>
<dbReference type="EMBL" id="AL391145">
    <property type="protein sequence ID" value="CAC01806.1"/>
    <property type="status" value="ALT_SEQ"/>
    <property type="molecule type" value="Genomic_DNA"/>
</dbReference>
<dbReference type="EMBL" id="CP002688">
    <property type="protein sequence ID" value="AED92243.1"/>
    <property type="molecule type" value="Genomic_DNA"/>
</dbReference>
<dbReference type="EMBL" id="AY128362">
    <property type="protein sequence ID" value="AAM91565.1"/>
    <property type="molecule type" value="mRNA"/>
</dbReference>
<dbReference type="EMBL" id="BT008893">
    <property type="protein sequence ID" value="AAP68332.1"/>
    <property type="molecule type" value="mRNA"/>
</dbReference>
<dbReference type="PIR" id="T51390">
    <property type="entry name" value="T51390"/>
</dbReference>
<dbReference type="RefSeq" id="NP_197111.2">
    <property type="nucleotide sequence ID" value="NM_121612.2"/>
</dbReference>
<dbReference type="SMR" id="Q8L7N0"/>
<dbReference type="FunCoup" id="Q8L7N0">
    <property type="interactions" value="4384"/>
</dbReference>
<dbReference type="IntAct" id="Q8L7N0">
    <property type="interactions" value="4"/>
</dbReference>
<dbReference type="STRING" id="3702.Q8L7N0"/>
<dbReference type="PaxDb" id="3702-AT5G16070.1"/>
<dbReference type="ProMEX" id="Q8L7N0"/>
<dbReference type="ProteomicsDB" id="234383"/>
<dbReference type="EnsemblPlants" id="AT5G16070.1">
    <property type="protein sequence ID" value="AT5G16070.1"/>
    <property type="gene ID" value="AT5G16070"/>
</dbReference>
<dbReference type="GeneID" id="831464"/>
<dbReference type="Gramene" id="AT5G16070.1">
    <property type="protein sequence ID" value="AT5G16070.1"/>
    <property type="gene ID" value="AT5G16070"/>
</dbReference>
<dbReference type="KEGG" id="ath:AT5G16070"/>
<dbReference type="Araport" id="AT5G16070"/>
<dbReference type="TAIR" id="AT5G16070"/>
<dbReference type="eggNOG" id="KOG0359">
    <property type="taxonomic scope" value="Eukaryota"/>
</dbReference>
<dbReference type="HOGENOM" id="CLU_008891_3_1_1"/>
<dbReference type="InParanoid" id="Q8L7N0"/>
<dbReference type="OMA" id="KNAIEDX"/>
<dbReference type="PhylomeDB" id="Q8L7N0"/>
<dbReference type="PRO" id="PR:Q8L7N0"/>
<dbReference type="Proteomes" id="UP000006548">
    <property type="component" value="Chromosome 5"/>
</dbReference>
<dbReference type="ExpressionAtlas" id="Q8L7N0">
    <property type="expression patterns" value="baseline and differential"/>
</dbReference>
<dbReference type="GO" id="GO:0009536">
    <property type="term" value="C:plastid"/>
    <property type="evidence" value="ECO:0007005"/>
    <property type="project" value="TAIR"/>
</dbReference>
<dbReference type="GO" id="GO:0005524">
    <property type="term" value="F:ATP binding"/>
    <property type="evidence" value="ECO:0007669"/>
    <property type="project" value="UniProtKB-KW"/>
</dbReference>
<dbReference type="GO" id="GO:0016887">
    <property type="term" value="F:ATP hydrolysis activity"/>
    <property type="evidence" value="ECO:0007669"/>
    <property type="project" value="InterPro"/>
</dbReference>
<dbReference type="GO" id="GO:0140662">
    <property type="term" value="F:ATP-dependent protein folding chaperone"/>
    <property type="evidence" value="ECO:0007669"/>
    <property type="project" value="InterPro"/>
</dbReference>
<dbReference type="GO" id="GO:0051082">
    <property type="term" value="F:unfolded protein binding"/>
    <property type="evidence" value="ECO:0007669"/>
    <property type="project" value="InterPro"/>
</dbReference>
<dbReference type="CDD" id="cd03342">
    <property type="entry name" value="TCP1_zeta"/>
    <property type="match status" value="1"/>
</dbReference>
<dbReference type="FunFam" id="1.10.560.10:FF:000038">
    <property type="entry name" value="Chaperonin containing TCP1 subunit 6B"/>
    <property type="match status" value="1"/>
</dbReference>
<dbReference type="FunFam" id="1.10.560.10:FF:000058">
    <property type="entry name" value="T-complex protein 1 subunit zeta"/>
    <property type="match status" value="1"/>
</dbReference>
<dbReference type="FunFam" id="3.30.260.10:FF:000017">
    <property type="entry name" value="T-complex protein 1 subunit zeta"/>
    <property type="match status" value="1"/>
</dbReference>
<dbReference type="FunFam" id="3.50.7.10:FF:000004">
    <property type="entry name" value="T-complex protein 1 subunit zeta"/>
    <property type="match status" value="1"/>
</dbReference>
<dbReference type="Gene3D" id="3.50.7.10">
    <property type="entry name" value="GroEL"/>
    <property type="match status" value="1"/>
</dbReference>
<dbReference type="Gene3D" id="1.10.560.10">
    <property type="entry name" value="GroEL-like equatorial domain"/>
    <property type="match status" value="1"/>
</dbReference>
<dbReference type="Gene3D" id="3.30.260.10">
    <property type="entry name" value="TCP-1-like chaperonin intermediate domain"/>
    <property type="match status" value="1"/>
</dbReference>
<dbReference type="InterPro" id="IPR012722">
    <property type="entry name" value="Chap_CCT_zeta"/>
</dbReference>
<dbReference type="InterPro" id="IPR017998">
    <property type="entry name" value="Chaperone_TCP-1"/>
</dbReference>
<dbReference type="InterPro" id="IPR002194">
    <property type="entry name" value="Chaperonin_TCP-1_CS"/>
</dbReference>
<dbReference type="InterPro" id="IPR002423">
    <property type="entry name" value="Cpn60/GroEL/TCP-1"/>
</dbReference>
<dbReference type="InterPro" id="IPR027409">
    <property type="entry name" value="GroEL-like_apical_dom_sf"/>
</dbReference>
<dbReference type="InterPro" id="IPR027413">
    <property type="entry name" value="GROEL-like_equatorial_sf"/>
</dbReference>
<dbReference type="InterPro" id="IPR027410">
    <property type="entry name" value="TCP-1-like_intermed_sf"/>
</dbReference>
<dbReference type="InterPro" id="IPR053374">
    <property type="entry name" value="TCP-1_chaperonin"/>
</dbReference>
<dbReference type="NCBIfam" id="TIGR02347">
    <property type="entry name" value="chap_CCT_zeta"/>
    <property type="match status" value="1"/>
</dbReference>
<dbReference type="NCBIfam" id="NF041083">
    <property type="entry name" value="thermosome_beta"/>
    <property type="match status" value="1"/>
</dbReference>
<dbReference type="PANTHER" id="PTHR11353">
    <property type="entry name" value="CHAPERONIN"/>
    <property type="match status" value="1"/>
</dbReference>
<dbReference type="Pfam" id="PF00118">
    <property type="entry name" value="Cpn60_TCP1"/>
    <property type="match status" value="1"/>
</dbReference>
<dbReference type="PRINTS" id="PR00304">
    <property type="entry name" value="TCOMPLEXTCP1"/>
</dbReference>
<dbReference type="SUPFAM" id="SSF52029">
    <property type="entry name" value="GroEL apical domain-like"/>
    <property type="match status" value="1"/>
</dbReference>
<dbReference type="SUPFAM" id="SSF48592">
    <property type="entry name" value="GroEL equatorial domain-like"/>
    <property type="match status" value="1"/>
</dbReference>
<dbReference type="SUPFAM" id="SSF54849">
    <property type="entry name" value="GroEL-intermediate domain like"/>
    <property type="match status" value="1"/>
</dbReference>
<dbReference type="PROSITE" id="PS00750">
    <property type="entry name" value="TCP1_1"/>
    <property type="match status" value="1"/>
</dbReference>
<dbReference type="PROSITE" id="PS00751">
    <property type="entry name" value="TCP1_2"/>
    <property type="match status" value="1"/>
</dbReference>
<feature type="chain" id="PRO_0000431663" description="T-complex protein 1 subunit zeta 2">
    <location>
        <begin position="1"/>
        <end position="535"/>
    </location>
</feature>
<sequence length="535" mass="58928">MSVRVLNPNAEVLNKSAALHMTINAAKGLQDVLKSNLGPKGTIKMLVGGSGDIKLTKDGNTLLKEMQIQNPTAIMIARTAVAQDDISGDGTTSTVIFIGELMKQSERCIDEGMHPRVLVDGFEIAKRATLQFLDNFKTPVVMGDEVDKEILKMVARTTLRTKLYEGLADQLTDIVVNSVLCIRKPEEAIDLFMVEIMHMRHKFDVDTRLVEGLVLDHGSRHPDMKRRAENCHILTCNVSLEYEKSEINAGFFYSNAEQREAMVTAERRSVDERVKKIIELKKKVCGDNDNFVVINQKGIDPPSLDLLAREGIIGLRRAKRRNMERLVLACGGEAVNSVDDLTPESLGWAGLVYEHVLGEEKYTFVEQVKNPNSCTILIKGPNDHTIAQIKDAVRDGLRSVKNTIEDECVVLGAGAFEVAARQHLLNEVKKTVQGRAQLGVEAFANALLVVPKTLAENAGLDTQDVIISLTSEHDKGNVVGLNLQDGEPIDPQLAGIFDNYSVKRQLINSGPVIASQLLLVDEVIRAGRNMRKPTA</sequence>
<reference key="1">
    <citation type="journal article" date="2000" name="Nature">
        <title>Sequence and analysis of chromosome 5 of the plant Arabidopsis thaliana.</title>
        <authorList>
            <person name="Tabata S."/>
            <person name="Kaneko T."/>
            <person name="Nakamura Y."/>
            <person name="Kotani H."/>
            <person name="Kato T."/>
            <person name="Asamizu E."/>
            <person name="Miyajima N."/>
            <person name="Sasamoto S."/>
            <person name="Kimura T."/>
            <person name="Hosouchi T."/>
            <person name="Kawashima K."/>
            <person name="Kohara M."/>
            <person name="Matsumoto M."/>
            <person name="Matsuno A."/>
            <person name="Muraki A."/>
            <person name="Nakayama S."/>
            <person name="Nakazaki N."/>
            <person name="Naruo K."/>
            <person name="Okumura S."/>
            <person name="Shinpo S."/>
            <person name="Takeuchi C."/>
            <person name="Wada T."/>
            <person name="Watanabe A."/>
            <person name="Yamada M."/>
            <person name="Yasuda M."/>
            <person name="Sato S."/>
            <person name="de la Bastide M."/>
            <person name="Huang E."/>
            <person name="Spiegel L."/>
            <person name="Gnoj L."/>
            <person name="O'Shaughnessy A."/>
            <person name="Preston R."/>
            <person name="Habermann K."/>
            <person name="Murray J."/>
            <person name="Johnson D."/>
            <person name="Rohlfing T."/>
            <person name="Nelson J."/>
            <person name="Stoneking T."/>
            <person name="Pepin K."/>
            <person name="Spieth J."/>
            <person name="Sekhon M."/>
            <person name="Armstrong J."/>
            <person name="Becker M."/>
            <person name="Belter E."/>
            <person name="Cordum H."/>
            <person name="Cordes M."/>
            <person name="Courtney L."/>
            <person name="Courtney W."/>
            <person name="Dante M."/>
            <person name="Du H."/>
            <person name="Edwards J."/>
            <person name="Fryman J."/>
            <person name="Haakensen B."/>
            <person name="Lamar E."/>
            <person name="Latreille P."/>
            <person name="Leonard S."/>
            <person name="Meyer R."/>
            <person name="Mulvaney E."/>
            <person name="Ozersky P."/>
            <person name="Riley A."/>
            <person name="Strowmatt C."/>
            <person name="Wagner-McPherson C."/>
            <person name="Wollam A."/>
            <person name="Yoakum M."/>
            <person name="Bell M."/>
            <person name="Dedhia N."/>
            <person name="Parnell L."/>
            <person name="Shah R."/>
            <person name="Rodriguez M."/>
            <person name="Hoon See L."/>
            <person name="Vil D."/>
            <person name="Baker J."/>
            <person name="Kirchoff K."/>
            <person name="Toth K."/>
            <person name="King L."/>
            <person name="Bahret A."/>
            <person name="Miller B."/>
            <person name="Marra M.A."/>
            <person name="Martienssen R."/>
            <person name="McCombie W.R."/>
            <person name="Wilson R.K."/>
            <person name="Murphy G."/>
            <person name="Bancroft I."/>
            <person name="Volckaert G."/>
            <person name="Wambutt R."/>
            <person name="Duesterhoeft A."/>
            <person name="Stiekema W."/>
            <person name="Pohl T."/>
            <person name="Entian K.-D."/>
            <person name="Terryn N."/>
            <person name="Hartley N."/>
            <person name="Bent E."/>
            <person name="Johnson S."/>
            <person name="Langham S.-A."/>
            <person name="McCullagh B."/>
            <person name="Robben J."/>
            <person name="Grymonprez B."/>
            <person name="Zimmermann W."/>
            <person name="Ramsperger U."/>
            <person name="Wedler H."/>
            <person name="Balke K."/>
            <person name="Wedler E."/>
            <person name="Peters S."/>
            <person name="van Staveren M."/>
            <person name="Dirkse W."/>
            <person name="Mooijman P."/>
            <person name="Klein Lankhorst R."/>
            <person name="Weitzenegger T."/>
            <person name="Bothe G."/>
            <person name="Rose M."/>
            <person name="Hauf J."/>
            <person name="Berneiser S."/>
            <person name="Hempel S."/>
            <person name="Feldpausch M."/>
            <person name="Lamberth S."/>
            <person name="Villarroel R."/>
            <person name="Gielen J."/>
            <person name="Ardiles W."/>
            <person name="Bents O."/>
            <person name="Lemcke K."/>
            <person name="Kolesov G."/>
            <person name="Mayer K.F.X."/>
            <person name="Rudd S."/>
            <person name="Schoof H."/>
            <person name="Schueller C."/>
            <person name="Zaccaria P."/>
            <person name="Mewes H.-W."/>
            <person name="Bevan M."/>
            <person name="Fransz P.F."/>
        </authorList>
    </citation>
    <scope>NUCLEOTIDE SEQUENCE [LARGE SCALE GENOMIC DNA]</scope>
    <source>
        <strain>cv. Columbia</strain>
    </source>
</reference>
<reference key="2">
    <citation type="journal article" date="2017" name="Plant J.">
        <title>Araport11: a complete reannotation of the Arabidopsis thaliana reference genome.</title>
        <authorList>
            <person name="Cheng C.Y."/>
            <person name="Krishnakumar V."/>
            <person name="Chan A.P."/>
            <person name="Thibaud-Nissen F."/>
            <person name="Schobel S."/>
            <person name="Town C.D."/>
        </authorList>
    </citation>
    <scope>GENOME REANNOTATION</scope>
    <source>
        <strain>cv. Columbia</strain>
    </source>
</reference>
<reference key="3">
    <citation type="journal article" date="2003" name="Science">
        <title>Empirical analysis of transcriptional activity in the Arabidopsis genome.</title>
        <authorList>
            <person name="Yamada K."/>
            <person name="Lim J."/>
            <person name="Dale J.M."/>
            <person name="Chen H."/>
            <person name="Shinn P."/>
            <person name="Palm C.J."/>
            <person name="Southwick A.M."/>
            <person name="Wu H.C."/>
            <person name="Kim C.J."/>
            <person name="Nguyen M."/>
            <person name="Pham P.K."/>
            <person name="Cheuk R.F."/>
            <person name="Karlin-Newmann G."/>
            <person name="Liu S.X."/>
            <person name="Lam B."/>
            <person name="Sakano H."/>
            <person name="Wu T."/>
            <person name="Yu G."/>
            <person name="Miranda M."/>
            <person name="Quach H.L."/>
            <person name="Tripp M."/>
            <person name="Chang C.H."/>
            <person name="Lee J.M."/>
            <person name="Toriumi M.J."/>
            <person name="Chan M.M."/>
            <person name="Tang C.C."/>
            <person name="Onodera C.S."/>
            <person name="Deng J.M."/>
            <person name="Akiyama K."/>
            <person name="Ansari Y."/>
            <person name="Arakawa T."/>
            <person name="Banh J."/>
            <person name="Banno F."/>
            <person name="Bowser L."/>
            <person name="Brooks S.Y."/>
            <person name="Carninci P."/>
            <person name="Chao Q."/>
            <person name="Choy N."/>
            <person name="Enju A."/>
            <person name="Goldsmith A.D."/>
            <person name="Gurjal M."/>
            <person name="Hansen N.F."/>
            <person name="Hayashizaki Y."/>
            <person name="Johnson-Hopson C."/>
            <person name="Hsuan V.W."/>
            <person name="Iida K."/>
            <person name="Karnes M."/>
            <person name="Khan S."/>
            <person name="Koesema E."/>
            <person name="Ishida J."/>
            <person name="Jiang P.X."/>
            <person name="Jones T."/>
            <person name="Kawai J."/>
            <person name="Kamiya A."/>
            <person name="Meyers C."/>
            <person name="Nakajima M."/>
            <person name="Narusaka M."/>
            <person name="Seki M."/>
            <person name="Sakurai T."/>
            <person name="Satou M."/>
            <person name="Tamse R."/>
            <person name="Vaysberg M."/>
            <person name="Wallender E.K."/>
            <person name="Wong C."/>
            <person name="Yamamura Y."/>
            <person name="Yuan S."/>
            <person name="Shinozaki K."/>
            <person name="Davis R.W."/>
            <person name="Theologis A."/>
            <person name="Ecker J.R."/>
        </authorList>
    </citation>
    <scope>NUCLEOTIDE SEQUENCE [LARGE SCALE MRNA]</scope>
    <source>
        <strain>cv. Columbia</strain>
    </source>
</reference>
<reference key="4">
    <citation type="journal article" date="2001" name="Cell Stress Chaperones">
        <title>Arabidopsis thaliana type I and II chaperonins.</title>
        <authorList>
            <person name="Hill J.E."/>
            <person name="Hemmingsen S.M."/>
        </authorList>
    </citation>
    <scope>GENE FAMILY</scope>
    <scope>NOMENCLATURE</scope>
    <scope>SUBUNIT</scope>
</reference>
<organism evidence="6">
    <name type="scientific">Arabidopsis thaliana</name>
    <name type="common">Mouse-ear cress</name>
    <dbReference type="NCBI Taxonomy" id="3702"/>
    <lineage>
        <taxon>Eukaryota</taxon>
        <taxon>Viridiplantae</taxon>
        <taxon>Streptophyta</taxon>
        <taxon>Embryophyta</taxon>
        <taxon>Tracheophyta</taxon>
        <taxon>Spermatophyta</taxon>
        <taxon>Magnoliopsida</taxon>
        <taxon>eudicotyledons</taxon>
        <taxon>Gunneridae</taxon>
        <taxon>Pentapetalae</taxon>
        <taxon>rosids</taxon>
        <taxon>malvids</taxon>
        <taxon>Brassicales</taxon>
        <taxon>Brassicaceae</taxon>
        <taxon>Camelineae</taxon>
        <taxon>Arabidopsis</taxon>
    </lineage>
</organism>
<gene>
    <name evidence="3" type="primary">CCT6B</name>
    <name evidence="5" type="ordered locus">At5g16070</name>
    <name evidence="7" type="ORF">F1N13.210</name>
</gene>
<keyword id="KW-0067">ATP-binding</keyword>
<keyword id="KW-0143">Chaperone</keyword>
<keyword id="KW-0963">Cytoplasm</keyword>
<keyword id="KW-0547">Nucleotide-binding</keyword>
<keyword id="KW-1185">Reference proteome</keyword>